<comment type="function">
    <text evidence="1">DNA nicking enzyme that cleaves extruded cruciform DNA at its tip. Probably nicks viral hairpins.</text>
</comment>
<comment type="subcellular location">
    <subcellularLocation>
        <location>Virion</location>
    </subcellularLocation>
    <text evidence="1">Virion core.</text>
</comment>
<comment type="induction">
    <text evidence="1">Expressed in the intermediate phase of the viral replicative cycle.</text>
</comment>
<comment type="similarity">
    <text evidence="3">Belongs to the orthopoxvirus OPG042 family.</text>
</comment>
<gene>
    <name type="primary">OPG042</name>
    <name type="ORF">K4L</name>
</gene>
<evidence type="ECO:0000250" key="1">
    <source>
        <dbReference type="UniProtKB" id="P18377"/>
    </source>
</evidence>
<evidence type="ECO:0000255" key="2">
    <source>
        <dbReference type="PROSITE-ProRule" id="PRU00153"/>
    </source>
</evidence>
<evidence type="ECO:0000305" key="3"/>
<sequence length="424" mass="48877">MNPDNTIAVITETIPIGMQFDKVYLSTFNMWREILSNTTKTLDISSFYWSLSDEVGTNFGTIILNEIVQLPKRGVRVRVAVNKSNKPLKDVERLQMAGVEVRYIDITNILGGVLHTKFWISDNTHIYLGSANMDWRSLTQVKELGIAIFNNRNLAADLTQIFEVYWYLGVNNLPYNWKNFYPSYYNTDHPLSINVSGVPHSVFIASAPQQLCTMERTNDLTALLSCIRNASKFVYVSVMNFIPIIYSKAGKILFWPYIEDELRRSAIDRQVSVKLLISCWQRSSFIMRNFLRSIAMLKSKNIDIEVKLFIVPDADPPIPYSRVNHAKYMVTDKTAYIGTSNWTGNYFTDTCGASINITPDDGLGLRQQLEDIFMRDWNSKYSYELYDTSPTKRCKLLKNMKQCTNDIYCDEIQPEKEIPEYSLE</sequence>
<name>PG042_VACCC</name>
<dbReference type="EMBL" id="M35027">
    <property type="protein sequence ID" value="AAA48010.1"/>
    <property type="molecule type" value="Genomic_DNA"/>
</dbReference>
<dbReference type="PIR" id="C42505">
    <property type="entry name" value="WMVZCX"/>
</dbReference>
<dbReference type="SMR" id="P20537"/>
<dbReference type="Proteomes" id="UP000008269">
    <property type="component" value="Segment"/>
</dbReference>
<dbReference type="GO" id="GO:0044423">
    <property type="term" value="C:virion component"/>
    <property type="evidence" value="ECO:0007669"/>
    <property type="project" value="UniProtKB-KW"/>
</dbReference>
<dbReference type="GO" id="GO:0004519">
    <property type="term" value="F:endonuclease activity"/>
    <property type="evidence" value="ECO:0007669"/>
    <property type="project" value="UniProtKB-KW"/>
</dbReference>
<dbReference type="CDD" id="cd09106">
    <property type="entry name" value="PLDc_vPLD3_4_5_like_1"/>
    <property type="match status" value="1"/>
</dbReference>
<dbReference type="CDD" id="cd09107">
    <property type="entry name" value="PLDc_vPLD3_4_5_like_2"/>
    <property type="match status" value="1"/>
</dbReference>
<dbReference type="Gene3D" id="3.30.870.10">
    <property type="entry name" value="Endonuclease Chain A"/>
    <property type="match status" value="2"/>
</dbReference>
<dbReference type="InterPro" id="IPR050874">
    <property type="entry name" value="Diverse_PLD-related"/>
</dbReference>
<dbReference type="InterPro" id="IPR032803">
    <property type="entry name" value="PLDc_3"/>
</dbReference>
<dbReference type="InterPro" id="IPR001736">
    <property type="entry name" value="PLipase_D/transphosphatidylase"/>
</dbReference>
<dbReference type="PANTHER" id="PTHR10185:SF16">
    <property type="entry name" value="5'-3' EXONUCLEASE PLD3"/>
    <property type="match status" value="1"/>
</dbReference>
<dbReference type="PANTHER" id="PTHR10185">
    <property type="entry name" value="PHOSPHOLIPASE D - RELATED"/>
    <property type="match status" value="1"/>
</dbReference>
<dbReference type="Pfam" id="PF00614">
    <property type="entry name" value="PLDc"/>
    <property type="match status" value="1"/>
</dbReference>
<dbReference type="Pfam" id="PF13918">
    <property type="entry name" value="PLDc_3"/>
    <property type="match status" value="1"/>
</dbReference>
<dbReference type="SMART" id="SM00155">
    <property type="entry name" value="PLDc"/>
    <property type="match status" value="2"/>
</dbReference>
<dbReference type="SUPFAM" id="SSF56024">
    <property type="entry name" value="Phospholipase D/nuclease"/>
    <property type="match status" value="2"/>
</dbReference>
<dbReference type="PROSITE" id="PS50035">
    <property type="entry name" value="PLD"/>
    <property type="match status" value="2"/>
</dbReference>
<proteinExistence type="inferred from homology"/>
<accession>P20537</accession>
<keyword id="KW-0255">Endonuclease</keyword>
<keyword id="KW-0378">Hydrolase</keyword>
<keyword id="KW-0540">Nuclease</keyword>
<keyword id="KW-1185">Reference proteome</keyword>
<keyword id="KW-0677">Repeat</keyword>
<keyword id="KW-0946">Virion</keyword>
<feature type="chain" id="PRO_0000099601" description="Virion nicking-joining enzyme">
    <location>
        <begin position="1"/>
        <end position="424"/>
    </location>
</feature>
<feature type="domain" description="PLD phosphodiesterase 1" evidence="2">
    <location>
        <begin position="110"/>
        <end position="137"/>
    </location>
</feature>
<feature type="domain" description="PLD phosphodiesterase 2" evidence="2">
    <location>
        <begin position="320"/>
        <end position="346"/>
    </location>
</feature>
<reference key="1">
    <citation type="journal article" date="1990" name="Virology">
        <title>The complete DNA sequence of vaccinia virus.</title>
        <authorList>
            <person name="Goebel S.J."/>
            <person name="Johnson G.P."/>
            <person name="Perkus M.E."/>
            <person name="Davis S.W."/>
            <person name="Winslow J.P."/>
            <person name="Paoletti E."/>
        </authorList>
    </citation>
    <scope>NUCLEOTIDE SEQUENCE [LARGE SCALE GENOMIC DNA]</scope>
</reference>
<reference key="2">
    <citation type="journal article" date="1990" name="Virology">
        <title>Appendix to 'The complete DNA sequence of vaccinia virus'.</title>
        <authorList>
            <person name="Goebel S.J."/>
            <person name="Johnson G.P."/>
            <person name="Perkus M.E."/>
            <person name="Davis S.W."/>
            <person name="Winslow J.P."/>
            <person name="Paoletti E."/>
        </authorList>
    </citation>
    <scope>NUCLEOTIDE SEQUENCE [LARGE SCALE GENOMIC DNA]</scope>
</reference>
<protein>
    <recommendedName>
        <fullName>Virion nicking-joining enzyme</fullName>
    </recommendedName>
    <alternativeName>
        <fullName>Phospholipase-D-like protein K4</fullName>
    </alternativeName>
</protein>
<organismHost>
    <name type="scientific">Homo sapiens</name>
    <name type="common">Human</name>
    <dbReference type="NCBI Taxonomy" id="9606"/>
</organismHost>
<organism>
    <name type="scientific">Vaccinia virus (strain Copenhagen)</name>
    <name type="common">VACV</name>
    <dbReference type="NCBI Taxonomy" id="10249"/>
    <lineage>
        <taxon>Viruses</taxon>
        <taxon>Varidnaviria</taxon>
        <taxon>Bamfordvirae</taxon>
        <taxon>Nucleocytoviricota</taxon>
        <taxon>Pokkesviricetes</taxon>
        <taxon>Chitovirales</taxon>
        <taxon>Poxviridae</taxon>
        <taxon>Chordopoxvirinae</taxon>
        <taxon>Orthopoxvirus</taxon>
        <taxon>Vaccinia virus</taxon>
    </lineage>
</organism>